<accession>B4U605</accession>
<keyword id="KW-0028">Amino-acid biosynthesis</keyword>
<keyword id="KW-0378">Hydrolase</keyword>
<keyword id="KW-0460">Magnesium</keyword>
<keyword id="KW-0479">Metal-binding</keyword>
<keyword id="KW-0486">Methionine biosynthesis</keyword>
<dbReference type="EC" id="3.1.3.77" evidence="1"/>
<dbReference type="EMBL" id="CP001130">
    <property type="protein sequence ID" value="ACG58195.1"/>
    <property type="molecule type" value="Genomic_DNA"/>
</dbReference>
<dbReference type="RefSeq" id="WP_012514551.1">
    <property type="nucleotide sequence ID" value="NC_011126.1"/>
</dbReference>
<dbReference type="SMR" id="B4U605"/>
<dbReference type="STRING" id="380749.HY04AAS1_1512"/>
<dbReference type="KEGG" id="hya:HY04AAS1_1512"/>
<dbReference type="eggNOG" id="COG4229">
    <property type="taxonomic scope" value="Bacteria"/>
</dbReference>
<dbReference type="HOGENOM" id="CLU_023273_0_0_0"/>
<dbReference type="OrthoDB" id="9809962at2"/>
<dbReference type="UniPathway" id="UPA00904">
    <property type="reaction ID" value="UER00876"/>
</dbReference>
<dbReference type="UniPathway" id="UPA00904">
    <property type="reaction ID" value="UER00877"/>
</dbReference>
<dbReference type="GO" id="GO:0043715">
    <property type="term" value="F:2,3-diketo-5-methylthiopentyl-1-phosphate enolase activity"/>
    <property type="evidence" value="ECO:0007669"/>
    <property type="project" value="UniProtKB-UniRule"/>
</dbReference>
<dbReference type="GO" id="GO:0043716">
    <property type="term" value="F:2-hydroxy-3-keto-5-methylthiopentenyl-1-phosphate phosphatase activity"/>
    <property type="evidence" value="ECO:0007669"/>
    <property type="project" value="UniProtKB-UniRule"/>
</dbReference>
<dbReference type="GO" id="GO:0043874">
    <property type="term" value="F:acireductone synthase activity"/>
    <property type="evidence" value="ECO:0007669"/>
    <property type="project" value="UniProtKB-EC"/>
</dbReference>
<dbReference type="GO" id="GO:0000287">
    <property type="term" value="F:magnesium ion binding"/>
    <property type="evidence" value="ECO:0007669"/>
    <property type="project" value="UniProtKB-UniRule"/>
</dbReference>
<dbReference type="GO" id="GO:0019509">
    <property type="term" value="P:L-methionine salvage from methylthioadenosine"/>
    <property type="evidence" value="ECO:0007669"/>
    <property type="project" value="UniProtKB-UniRule"/>
</dbReference>
<dbReference type="CDD" id="cd01629">
    <property type="entry name" value="HAD_EP"/>
    <property type="match status" value="1"/>
</dbReference>
<dbReference type="Gene3D" id="1.10.720.60">
    <property type="match status" value="1"/>
</dbReference>
<dbReference type="Gene3D" id="3.40.50.1000">
    <property type="entry name" value="HAD superfamily/HAD-like"/>
    <property type="match status" value="1"/>
</dbReference>
<dbReference type="HAMAP" id="MF_01681">
    <property type="entry name" value="Salvage_MtnC"/>
    <property type="match status" value="1"/>
</dbReference>
<dbReference type="InterPro" id="IPR023943">
    <property type="entry name" value="Enolase-ppase_E1"/>
</dbReference>
<dbReference type="InterPro" id="IPR036412">
    <property type="entry name" value="HAD-like_sf"/>
</dbReference>
<dbReference type="InterPro" id="IPR006439">
    <property type="entry name" value="HAD-SF_hydro_IA"/>
</dbReference>
<dbReference type="InterPro" id="IPR023214">
    <property type="entry name" value="HAD_sf"/>
</dbReference>
<dbReference type="NCBIfam" id="TIGR01691">
    <property type="entry name" value="enolase-ppase"/>
    <property type="match status" value="1"/>
</dbReference>
<dbReference type="NCBIfam" id="TIGR01549">
    <property type="entry name" value="HAD-SF-IA-v1"/>
    <property type="match status" value="1"/>
</dbReference>
<dbReference type="PANTHER" id="PTHR20371">
    <property type="entry name" value="ENOLASE-PHOSPHATASE E1"/>
    <property type="match status" value="1"/>
</dbReference>
<dbReference type="PANTHER" id="PTHR20371:SF1">
    <property type="entry name" value="ENOLASE-PHOSPHATASE E1"/>
    <property type="match status" value="1"/>
</dbReference>
<dbReference type="Pfam" id="PF00702">
    <property type="entry name" value="Hydrolase"/>
    <property type="match status" value="1"/>
</dbReference>
<dbReference type="SFLD" id="SFLDG01129">
    <property type="entry name" value="C1.5:_HAD__Beta-PGM__Phosphata"/>
    <property type="match status" value="1"/>
</dbReference>
<dbReference type="SFLD" id="SFLDF00044">
    <property type="entry name" value="enolase-phosphatase"/>
    <property type="match status" value="1"/>
</dbReference>
<dbReference type="SUPFAM" id="SSF56784">
    <property type="entry name" value="HAD-like"/>
    <property type="match status" value="1"/>
</dbReference>
<proteinExistence type="inferred from homology"/>
<comment type="function">
    <text evidence="1">Bifunctional enzyme that catalyzes the enolization of 2,3-diketo-5-methylthiopentyl-1-phosphate (DK-MTP-1-P) into the intermediate 2-hydroxy-3-keto-5-methylthiopentenyl-1-phosphate (HK-MTPenyl-1-P), which is then dephosphorylated to form the acireductone 1,2-dihydroxy-3-keto-5-methylthiopentene (DHK-MTPene).</text>
</comment>
<comment type="catalytic activity">
    <reaction evidence="1">
        <text>5-methylsulfanyl-2,3-dioxopentyl phosphate + H2O = 1,2-dihydroxy-5-(methylsulfanyl)pent-1-en-3-one + phosphate</text>
        <dbReference type="Rhea" id="RHEA:21700"/>
        <dbReference type="ChEBI" id="CHEBI:15377"/>
        <dbReference type="ChEBI" id="CHEBI:43474"/>
        <dbReference type="ChEBI" id="CHEBI:49252"/>
        <dbReference type="ChEBI" id="CHEBI:58828"/>
        <dbReference type="EC" id="3.1.3.77"/>
    </reaction>
</comment>
<comment type="cofactor">
    <cofactor evidence="1">
        <name>Mg(2+)</name>
        <dbReference type="ChEBI" id="CHEBI:18420"/>
    </cofactor>
    <text evidence="1">Binds 1 Mg(2+) ion per subunit.</text>
</comment>
<comment type="pathway">
    <text evidence="1">Amino-acid biosynthesis; L-methionine biosynthesis via salvage pathway; L-methionine from S-methyl-5-thio-alpha-D-ribose 1-phosphate: step 3/6.</text>
</comment>
<comment type="pathway">
    <text evidence="1">Amino-acid biosynthesis; L-methionine biosynthesis via salvage pathway; L-methionine from S-methyl-5-thio-alpha-D-ribose 1-phosphate: step 4/6.</text>
</comment>
<comment type="subunit">
    <text evidence="1">Monomer.</text>
</comment>
<comment type="similarity">
    <text evidence="1">Belongs to the HAD-like hydrolase superfamily. MasA/MtnC family.</text>
</comment>
<gene>
    <name evidence="1" type="primary">mtnC</name>
    <name type="ordered locus">HY04AAS1_1512</name>
</gene>
<sequence>MIKAILTDIEGTTSSINYVKDVMFGYSKKRLKDYLQTHWEEEHVKNIVKSLSQKLEKNIDLQTAVLVFKDFIEKDIKDTLLKELQGHIWEEGFKSGELKGHIYEDAYIKLKELKEKGYKIFAYSSGSIKAQKLFFGYSVYGDITNFFDGFFDTTMGSKKDKNSYIKIASATEIDPQMFLFLSDVKEEINASKEAGMNAILVSRDRPCEEKDCIRDFTEINL</sequence>
<protein>
    <recommendedName>
        <fullName evidence="1">Enolase-phosphatase E1</fullName>
        <ecNumber evidence="1">3.1.3.77</ecNumber>
    </recommendedName>
    <alternativeName>
        <fullName evidence="1">2,3-diketo-5-methylthio-1-phosphopentane phosphatase</fullName>
    </alternativeName>
</protein>
<name>MTNC_HYDS0</name>
<feature type="chain" id="PRO_0000357371" description="Enolase-phosphatase E1">
    <location>
        <begin position="1"/>
        <end position="221"/>
    </location>
</feature>
<reference key="1">
    <citation type="journal article" date="2009" name="J. Bacteriol.">
        <title>Complete and draft genome sequences of six members of the Aquificales.</title>
        <authorList>
            <person name="Reysenbach A.-L."/>
            <person name="Hamamura N."/>
            <person name="Podar M."/>
            <person name="Griffiths E."/>
            <person name="Ferreira S."/>
            <person name="Hochstein R."/>
            <person name="Heidelberg J."/>
            <person name="Johnson J."/>
            <person name="Mead D."/>
            <person name="Pohorille A."/>
            <person name="Sarmiento M."/>
            <person name="Schweighofer K."/>
            <person name="Seshadri R."/>
            <person name="Voytek M.A."/>
        </authorList>
    </citation>
    <scope>NUCLEOTIDE SEQUENCE [LARGE SCALE GENOMIC DNA]</scope>
    <source>
        <strain>Y04AAS1</strain>
    </source>
</reference>
<organism>
    <name type="scientific">Hydrogenobaculum sp. (strain Y04AAS1)</name>
    <dbReference type="NCBI Taxonomy" id="380749"/>
    <lineage>
        <taxon>Bacteria</taxon>
        <taxon>Pseudomonadati</taxon>
        <taxon>Aquificota</taxon>
        <taxon>Aquificia</taxon>
        <taxon>Aquificales</taxon>
        <taxon>Aquificaceae</taxon>
        <taxon>Hydrogenobaculum</taxon>
    </lineage>
</organism>
<evidence type="ECO:0000255" key="1">
    <source>
        <dbReference type="HAMAP-Rule" id="MF_01681"/>
    </source>
</evidence>